<feature type="chain" id="PRO_0000221201" description="Ribonuclease VapC36">
    <location>
        <begin position="1"/>
        <end position="139"/>
    </location>
</feature>
<feature type="domain" description="PINc" evidence="1">
    <location>
        <begin position="1"/>
        <end position="127"/>
    </location>
</feature>
<feature type="binding site" evidence="1">
    <location>
        <position position="4"/>
    </location>
    <ligand>
        <name>Mg(2+)</name>
        <dbReference type="ChEBI" id="CHEBI:18420"/>
    </ligand>
</feature>
<feature type="binding site" evidence="1">
    <location>
        <position position="100"/>
    </location>
    <ligand>
        <name>Mg(2+)</name>
        <dbReference type="ChEBI" id="CHEBI:18420"/>
    </ligand>
</feature>
<organism>
    <name type="scientific">Mycobacterium tuberculosis (strain ATCC 25618 / H37Rv)</name>
    <dbReference type="NCBI Taxonomy" id="83332"/>
    <lineage>
        <taxon>Bacteria</taxon>
        <taxon>Bacillati</taxon>
        <taxon>Actinomycetota</taxon>
        <taxon>Actinomycetes</taxon>
        <taxon>Mycobacteriales</taxon>
        <taxon>Mycobacteriaceae</taxon>
        <taxon>Mycobacterium</taxon>
        <taxon>Mycobacterium tuberculosis complex</taxon>
    </lineage>
</organism>
<proteinExistence type="evidence at protein level"/>
<dbReference type="EC" id="3.1.-.-" evidence="1"/>
<dbReference type="EMBL" id="AL123456">
    <property type="protein sequence ID" value="CCP44751.1"/>
    <property type="molecule type" value="Genomic_DNA"/>
</dbReference>
<dbReference type="PIR" id="D70756">
    <property type="entry name" value="D70756"/>
</dbReference>
<dbReference type="RefSeq" id="NP_216498.1">
    <property type="nucleotide sequence ID" value="NC_000962.3"/>
</dbReference>
<dbReference type="RefSeq" id="WP_003409958.1">
    <property type="nucleotide sequence ID" value="NZ_NVQJ01000048.1"/>
</dbReference>
<dbReference type="SMR" id="P9WF65"/>
<dbReference type="STRING" id="83332.Rv1982c"/>
<dbReference type="PaxDb" id="83332-Rv1982c"/>
<dbReference type="DNASU" id="885816"/>
<dbReference type="GeneID" id="885816"/>
<dbReference type="KEGG" id="mtu:Rv1982c"/>
<dbReference type="KEGG" id="mtv:RVBD_1982c"/>
<dbReference type="TubercuList" id="Rv1982c"/>
<dbReference type="eggNOG" id="COG3742">
    <property type="taxonomic scope" value="Bacteria"/>
</dbReference>
<dbReference type="InParanoid" id="P9WF65"/>
<dbReference type="OrthoDB" id="32625at2"/>
<dbReference type="PhylomeDB" id="P9WF65"/>
<dbReference type="Proteomes" id="UP000001584">
    <property type="component" value="Chromosome"/>
</dbReference>
<dbReference type="GO" id="GO:0000287">
    <property type="term" value="F:magnesium ion binding"/>
    <property type="evidence" value="ECO:0007669"/>
    <property type="project" value="UniProtKB-UniRule"/>
</dbReference>
<dbReference type="GO" id="GO:0004540">
    <property type="term" value="F:RNA nuclease activity"/>
    <property type="evidence" value="ECO:0007669"/>
    <property type="project" value="InterPro"/>
</dbReference>
<dbReference type="CDD" id="cd09871">
    <property type="entry name" value="PIN_MtVapC28-VapC30-like"/>
    <property type="match status" value="1"/>
</dbReference>
<dbReference type="Gene3D" id="3.40.50.1010">
    <property type="entry name" value="5'-nuclease"/>
    <property type="match status" value="1"/>
</dbReference>
<dbReference type="HAMAP" id="MF_00265">
    <property type="entry name" value="VapC_Nob1"/>
    <property type="match status" value="1"/>
</dbReference>
<dbReference type="InterPro" id="IPR029060">
    <property type="entry name" value="PIN-like_dom_sf"/>
</dbReference>
<dbReference type="InterPro" id="IPR002716">
    <property type="entry name" value="PIN_dom"/>
</dbReference>
<dbReference type="InterPro" id="IPR050556">
    <property type="entry name" value="Type_II_TA_system_RNase"/>
</dbReference>
<dbReference type="InterPro" id="IPR022907">
    <property type="entry name" value="VapC_family"/>
</dbReference>
<dbReference type="PANTHER" id="PTHR33653">
    <property type="entry name" value="RIBONUCLEASE VAPC2"/>
    <property type="match status" value="1"/>
</dbReference>
<dbReference type="PANTHER" id="PTHR33653:SF1">
    <property type="entry name" value="RIBONUCLEASE VAPC2"/>
    <property type="match status" value="1"/>
</dbReference>
<dbReference type="Pfam" id="PF01850">
    <property type="entry name" value="PIN"/>
    <property type="match status" value="1"/>
</dbReference>
<dbReference type="SUPFAM" id="SSF88723">
    <property type="entry name" value="PIN domain-like"/>
    <property type="match status" value="1"/>
</dbReference>
<evidence type="ECO:0000255" key="1">
    <source>
        <dbReference type="HAMAP-Rule" id="MF_00265"/>
    </source>
</evidence>
<sequence length="139" mass="14725">MIVDTSAVVALVQGERPHATLVAAALAGAHSPVMSAPTVAECLIVLTARHGPVARTIFERLRSEIGLSVSSFTAEHAAATQRAFLRYGKGRHRAALNFGDCMTYATAQLGHQPLLAVGNDFPQTDLEFRGVVGYWPGVA</sequence>
<name>VPC36_MYCTU</name>
<comment type="function">
    <text evidence="1">Toxic component of a type II toxin-antitoxin (TA) system. An RNase. Its cognate antitoxin is VapB36 (By similarity).</text>
</comment>
<comment type="cofactor">
    <cofactor evidence="1">
        <name>Mg(2+)</name>
        <dbReference type="ChEBI" id="CHEBI:18420"/>
    </cofactor>
</comment>
<comment type="similarity">
    <text evidence="1">Belongs to the PINc/VapC protein family.</text>
</comment>
<accession>P9WF65</accession>
<accession>L0T9U4</accession>
<accession>P0A652</accession>
<accession>Q10874</accession>
<reference key="1">
    <citation type="journal article" date="1998" name="Nature">
        <title>Deciphering the biology of Mycobacterium tuberculosis from the complete genome sequence.</title>
        <authorList>
            <person name="Cole S.T."/>
            <person name="Brosch R."/>
            <person name="Parkhill J."/>
            <person name="Garnier T."/>
            <person name="Churcher C.M."/>
            <person name="Harris D.E."/>
            <person name="Gordon S.V."/>
            <person name="Eiglmeier K."/>
            <person name="Gas S."/>
            <person name="Barry C.E. III"/>
            <person name="Tekaia F."/>
            <person name="Badcock K."/>
            <person name="Basham D."/>
            <person name="Brown D."/>
            <person name="Chillingworth T."/>
            <person name="Connor R."/>
            <person name="Davies R.M."/>
            <person name="Devlin K."/>
            <person name="Feltwell T."/>
            <person name="Gentles S."/>
            <person name="Hamlin N."/>
            <person name="Holroyd S."/>
            <person name="Hornsby T."/>
            <person name="Jagels K."/>
            <person name="Krogh A."/>
            <person name="McLean J."/>
            <person name="Moule S."/>
            <person name="Murphy L.D."/>
            <person name="Oliver S."/>
            <person name="Osborne J."/>
            <person name="Quail M.A."/>
            <person name="Rajandream M.A."/>
            <person name="Rogers J."/>
            <person name="Rutter S."/>
            <person name="Seeger K."/>
            <person name="Skelton S."/>
            <person name="Squares S."/>
            <person name="Squares R."/>
            <person name="Sulston J.E."/>
            <person name="Taylor K."/>
            <person name="Whitehead S."/>
            <person name="Barrell B.G."/>
        </authorList>
    </citation>
    <scope>NUCLEOTIDE SEQUENCE [LARGE SCALE GENOMIC DNA]</scope>
    <source>
        <strain>ATCC 25618 / H37Rv</strain>
    </source>
</reference>
<reference key="2">
    <citation type="journal article" date="2009" name="PLoS Genet.">
        <title>Comprehensive functional analysis of Mycobacterium tuberculosis toxin-antitoxin systems: implications for pathogenesis, stress responses, and evolution.</title>
        <authorList>
            <person name="Ramage H.R."/>
            <person name="Connolly L.E."/>
            <person name="Cox J.S."/>
        </authorList>
    </citation>
    <scope>POSSIBLE FUNCTION</scope>
    <source>
        <strain>ATCC 35801 / TMC 107 / Erdman</strain>
    </source>
</reference>
<reference key="3">
    <citation type="journal article" date="2011" name="Mol. Cell. Proteomics">
        <title>Proteogenomic analysis of Mycobacterium tuberculosis by high resolution mass spectrometry.</title>
        <authorList>
            <person name="Kelkar D.S."/>
            <person name="Kumar D."/>
            <person name="Kumar P."/>
            <person name="Balakrishnan L."/>
            <person name="Muthusamy B."/>
            <person name="Yadav A.K."/>
            <person name="Shrivastava P."/>
            <person name="Marimuthu A."/>
            <person name="Anand S."/>
            <person name="Sundaram H."/>
            <person name="Kingsbury R."/>
            <person name="Harsha H.C."/>
            <person name="Nair B."/>
            <person name="Prasad T.S."/>
            <person name="Chauhan D.S."/>
            <person name="Katoch K."/>
            <person name="Katoch V.M."/>
            <person name="Kumar P."/>
            <person name="Chaerkady R."/>
            <person name="Ramachandran S."/>
            <person name="Dash D."/>
            <person name="Pandey A."/>
        </authorList>
    </citation>
    <scope>IDENTIFICATION BY MASS SPECTROMETRY [LARGE SCALE ANALYSIS]</scope>
    <source>
        <strain>ATCC 25618 / H37Rv</strain>
    </source>
</reference>
<protein>
    <recommendedName>
        <fullName evidence="1">Ribonuclease VapC36</fullName>
        <shortName evidence="1">RNase VapC36</shortName>
        <ecNumber evidence="1">3.1.-.-</ecNumber>
    </recommendedName>
    <alternativeName>
        <fullName evidence="1">Toxin VapC36</fullName>
    </alternativeName>
</protein>
<gene>
    <name evidence="1" type="primary">vapC36</name>
    <name type="ordered locus">Rv1982c</name>
    <name type="ORF">MTCY39.37</name>
</gene>
<keyword id="KW-0378">Hydrolase</keyword>
<keyword id="KW-0460">Magnesium</keyword>
<keyword id="KW-0479">Metal-binding</keyword>
<keyword id="KW-0540">Nuclease</keyword>
<keyword id="KW-1185">Reference proteome</keyword>
<keyword id="KW-1277">Toxin-antitoxin system</keyword>